<organism>
    <name type="scientific">Saccharolobus solfataricus (strain ATCC 35092 / DSM 1617 / JCM 11322 / P2)</name>
    <name type="common">Sulfolobus solfataricus</name>
    <dbReference type="NCBI Taxonomy" id="273057"/>
    <lineage>
        <taxon>Archaea</taxon>
        <taxon>Thermoproteota</taxon>
        <taxon>Thermoprotei</taxon>
        <taxon>Sulfolobales</taxon>
        <taxon>Sulfolobaceae</taxon>
        <taxon>Saccharolobus</taxon>
    </lineage>
</organism>
<keyword id="KW-1185">Reference proteome</keyword>
<reference key="1">
    <citation type="journal article" date="2001" name="Proc. Natl. Acad. Sci. U.S.A.">
        <title>The complete genome of the crenarchaeon Sulfolobus solfataricus P2.</title>
        <authorList>
            <person name="She Q."/>
            <person name="Singh R.K."/>
            <person name="Confalonieri F."/>
            <person name="Zivanovic Y."/>
            <person name="Allard G."/>
            <person name="Awayez M.J."/>
            <person name="Chan-Weiher C.C.-Y."/>
            <person name="Clausen I.G."/>
            <person name="Curtis B.A."/>
            <person name="De Moors A."/>
            <person name="Erauso G."/>
            <person name="Fletcher C."/>
            <person name="Gordon P.M.K."/>
            <person name="Heikamp-de Jong I."/>
            <person name="Jeffries A.C."/>
            <person name="Kozera C.J."/>
            <person name="Medina N."/>
            <person name="Peng X."/>
            <person name="Thi-Ngoc H.P."/>
            <person name="Redder P."/>
            <person name="Schenk M.E."/>
            <person name="Theriault C."/>
            <person name="Tolstrup N."/>
            <person name="Charlebois R.L."/>
            <person name="Doolittle W.F."/>
            <person name="Duguet M."/>
            <person name="Gaasterland T."/>
            <person name="Garrett R.A."/>
            <person name="Ragan M.A."/>
            <person name="Sensen C.W."/>
            <person name="Van der Oost J."/>
        </authorList>
    </citation>
    <scope>NUCLEOTIDE SEQUENCE [LARGE SCALE GENOMIC DNA]</scope>
    <source>
        <strain>ATCC 35092 / DSM 1617 / JCM 11322 / P2</strain>
    </source>
</reference>
<proteinExistence type="inferred from homology"/>
<name>Y2213_SACS2</name>
<sequence length="347" mass="36980">MIKAYFGAETFTLNKDFAYILVIGTTDVSLIPGLTIAGATPELTHFTPAADAEYVILGKCKSINTIPVSPTGIPTPALLTRASLSFTKSLKIVVNAGSRITPKIPYIDLQGEPGKDIRKQALSIEKVNIIIENGIKLGEELSNEYELIMIGESIPAGTTTAMATLLALGYDAMDKVSSASPDNPKELKRKVVEEALRNLPTDPLQRLAKVSDPVLLGVAGISLGFRGKILLAGGTQMTAAAAIVNEFDKSKLKDIIIGTTKWIVEDKSADMLSLAKQVGVKVLASMLDLSISIHEGIRTYEKGYVKEGVGAGGSTIMAFIRGVSNSTLVRKIDELYSELVGSNNLNT</sequence>
<dbReference type="EMBL" id="AE006641">
    <property type="protein sequence ID" value="AAK42383.1"/>
    <property type="molecule type" value="Genomic_DNA"/>
</dbReference>
<dbReference type="PIR" id="H90390">
    <property type="entry name" value="H90390"/>
</dbReference>
<dbReference type="SMR" id="Q97WK3"/>
<dbReference type="STRING" id="273057.SSO2213"/>
<dbReference type="PaxDb" id="273057-SSO2213"/>
<dbReference type="EnsemblBacteria" id="AAK42383">
    <property type="protein sequence ID" value="AAK42383"/>
    <property type="gene ID" value="SSO2213"/>
</dbReference>
<dbReference type="KEGG" id="sso:SSO2213"/>
<dbReference type="PATRIC" id="fig|273057.12.peg.2309"/>
<dbReference type="eggNOG" id="arCOG04272">
    <property type="taxonomic scope" value="Archaea"/>
</dbReference>
<dbReference type="HOGENOM" id="CLU_053134_0_0_2"/>
<dbReference type="InParanoid" id="Q97WK3"/>
<dbReference type="PhylomeDB" id="Q97WK3"/>
<dbReference type="Proteomes" id="UP000001974">
    <property type="component" value="Chromosome"/>
</dbReference>
<dbReference type="GO" id="GO:0008939">
    <property type="term" value="F:nicotinate-nucleotide-dimethylbenzimidazole phosphoribosyltransferase activity"/>
    <property type="evidence" value="ECO:0007669"/>
    <property type="project" value="InterPro"/>
</dbReference>
<dbReference type="CDD" id="cd02439">
    <property type="entry name" value="DMB-PRT_CobT"/>
    <property type="match status" value="1"/>
</dbReference>
<dbReference type="Gene3D" id="3.40.50.10210">
    <property type="match status" value="1"/>
</dbReference>
<dbReference type="HAMAP" id="MF_01086">
    <property type="entry name" value="UPF0284"/>
    <property type="match status" value="1"/>
</dbReference>
<dbReference type="InterPro" id="IPR003200">
    <property type="entry name" value="Nict_dMeBzImd_PRibTrfase"/>
</dbReference>
<dbReference type="InterPro" id="IPR002805">
    <property type="entry name" value="Nict_dMeBzImd_PRibTrfase_arc"/>
</dbReference>
<dbReference type="InterPro" id="IPR036087">
    <property type="entry name" value="Nict_dMeBzImd_PRibTrfase_sf"/>
</dbReference>
<dbReference type="NCBIfam" id="TIGR00303">
    <property type="entry name" value="nicotinate mononucleotide-dependent phosphoribosyltransferase CobT"/>
    <property type="match status" value="1"/>
</dbReference>
<dbReference type="NCBIfam" id="NF003368">
    <property type="entry name" value="PRK04447.1-1"/>
    <property type="match status" value="1"/>
</dbReference>
<dbReference type="NCBIfam" id="NF003370">
    <property type="entry name" value="PRK04447.1-3"/>
    <property type="match status" value="1"/>
</dbReference>
<dbReference type="NCBIfam" id="NF003372">
    <property type="entry name" value="PRK04447.1-5"/>
    <property type="match status" value="1"/>
</dbReference>
<dbReference type="PANTHER" id="PTHR38811">
    <property type="match status" value="1"/>
</dbReference>
<dbReference type="PANTHER" id="PTHR38811:SF1">
    <property type="entry name" value="UPF0284 PROTEIN SLL1500"/>
    <property type="match status" value="1"/>
</dbReference>
<dbReference type="Pfam" id="PF02277">
    <property type="entry name" value="DBI_PRT"/>
    <property type="match status" value="1"/>
</dbReference>
<dbReference type="SUPFAM" id="SSF52733">
    <property type="entry name" value="Nicotinate mononucleotide:5,6-dimethylbenzimidazole phosphoribosyltransferase (CobT)"/>
    <property type="match status" value="1"/>
</dbReference>
<feature type="chain" id="PRO_0000151061" description="UPF0284 protein SSO2213">
    <location>
        <begin position="1"/>
        <end position="347"/>
    </location>
</feature>
<accession>Q97WK3</accession>
<gene>
    <name type="ordered locus">SSO2213</name>
</gene>
<comment type="similarity">
    <text evidence="1">Belongs to the UPF0284 family.</text>
</comment>
<protein>
    <recommendedName>
        <fullName evidence="1">UPF0284 protein SSO2213</fullName>
    </recommendedName>
</protein>
<evidence type="ECO:0000255" key="1">
    <source>
        <dbReference type="HAMAP-Rule" id="MF_01086"/>
    </source>
</evidence>